<gene>
    <name type="primary">Krt20</name>
    <name type="synonym">Krt21</name>
</gene>
<comment type="function">
    <text evidence="1">Plays a significant role in maintaining keratin filament organization in intestinal epithelia. When phosphorylated, plays a role in the secretion of mucin in the small intestine (By similarity).</text>
</comment>
<comment type="subunit">
    <text evidence="1">Heterotetramer of two type I and two type II keratins. Associates with KRT8 (By similarity).</text>
</comment>
<comment type="tissue specificity">
    <text evidence="4 5">Expressed predominantly in the intestinal epithelium in differentiated villus cells.</text>
</comment>
<comment type="developmental stage">
    <text evidence="5">Becomes apparent upon completion of villus formation at 20 days gestation (2 days before birth) and is expressed by the entire epithelium of the villus.</text>
</comment>
<comment type="PTM">
    <text evidence="1">Hyperphosphorylation at Ser-13 occurs during the early stages of apoptosis but becomes less prominent during the later stages. Phosphorylation at Ser-13 also increases in response to stress brought on by cell injury (By similarity).</text>
</comment>
<comment type="PTM">
    <text evidence="1">Proteolytically cleaved by caspases during apoptosis. Cleavage occurs at Asp-233 (By similarity).</text>
</comment>
<comment type="miscellaneous">
    <text>There are two types of cytoskeletal and microfibrillar keratin: I (acidic; 40-55 kDa) and II (neutral to basic; 56-70 kDa).</text>
</comment>
<comment type="similarity">
    <text evidence="2">Belongs to the intermediate filament family.</text>
</comment>
<accession>P25030</accession>
<feature type="chain" id="PRO_0000063676" description="Keratin, type I cytoskeletal 20">
    <location>
        <begin position="1"/>
        <end position="429"/>
    </location>
</feature>
<feature type="domain" description="IF rod" evidence="2">
    <location>
        <begin position="75"/>
        <end position="386"/>
    </location>
</feature>
<feature type="region of interest" description="Head">
    <location>
        <begin position="1"/>
        <end position="74"/>
    </location>
</feature>
<feature type="region of interest" description="Disordered" evidence="3">
    <location>
        <begin position="1"/>
        <end position="26"/>
    </location>
</feature>
<feature type="region of interest" description="Coil 1A">
    <location>
        <begin position="75"/>
        <end position="110"/>
    </location>
</feature>
<feature type="region of interest" description="Linker 1">
    <location>
        <begin position="111"/>
        <end position="128"/>
    </location>
</feature>
<feature type="region of interest" description="Coil 1B">
    <location>
        <begin position="129"/>
        <end position="220"/>
    </location>
</feature>
<feature type="region of interest" description="Linker 12">
    <location>
        <begin position="221"/>
        <end position="243"/>
    </location>
</feature>
<feature type="region of interest" description="Coil 2">
    <location>
        <begin position="244"/>
        <end position="382"/>
    </location>
</feature>
<feature type="region of interest" description="Tail">
    <location>
        <begin position="383"/>
        <end position="429"/>
    </location>
</feature>
<feature type="compositionally biased region" description="Low complexity" evidence="3">
    <location>
        <begin position="10"/>
        <end position="26"/>
    </location>
</feature>
<feature type="site" description="Cleavage; by caspases" evidence="1">
    <location>
        <begin position="233"/>
        <end position="234"/>
    </location>
</feature>
<feature type="modified residue" description="Phosphoserine" evidence="6">
    <location>
        <position position="13"/>
    </location>
</feature>
<feature type="modified residue" description="Phosphoserine" evidence="6">
    <location>
        <position position="16"/>
    </location>
</feature>
<feature type="modified residue" description="Phosphoserine" evidence="6">
    <location>
        <position position="26"/>
    </location>
</feature>
<dbReference type="EMBL" id="M63665">
    <property type="protein sequence ID" value="AAA41473.1"/>
    <property type="molecule type" value="mRNA"/>
</dbReference>
<dbReference type="PIR" id="A40452">
    <property type="entry name" value="A40452"/>
</dbReference>
<dbReference type="RefSeq" id="NP_775151.1">
    <property type="nucleotide sequence ID" value="NM_173128.1"/>
</dbReference>
<dbReference type="SMR" id="P25030"/>
<dbReference type="FunCoup" id="P25030">
    <property type="interactions" value="221"/>
</dbReference>
<dbReference type="IntAct" id="P25030">
    <property type="interactions" value="3"/>
</dbReference>
<dbReference type="STRING" id="10116.ENSRNOP00000036880"/>
<dbReference type="iPTMnet" id="P25030"/>
<dbReference type="PhosphoSitePlus" id="P25030"/>
<dbReference type="GeneID" id="286912"/>
<dbReference type="KEGG" id="rno:286912"/>
<dbReference type="UCSC" id="RGD:628646">
    <property type="organism name" value="rat"/>
</dbReference>
<dbReference type="AGR" id="RGD:628646"/>
<dbReference type="CTD" id="54474"/>
<dbReference type="RGD" id="628646">
    <property type="gene designation" value="Krt20"/>
</dbReference>
<dbReference type="InParanoid" id="P25030"/>
<dbReference type="PhylomeDB" id="P25030"/>
<dbReference type="Reactome" id="R-RNO-6805567">
    <property type="pathway name" value="Keratinization"/>
</dbReference>
<dbReference type="Reactome" id="R-RNO-6809371">
    <property type="pathway name" value="Formation of the cornified envelope"/>
</dbReference>
<dbReference type="PRO" id="PR:P25030"/>
<dbReference type="Proteomes" id="UP000002494">
    <property type="component" value="Unplaced"/>
</dbReference>
<dbReference type="GO" id="GO:0005737">
    <property type="term" value="C:cytoplasm"/>
    <property type="evidence" value="ECO:0000266"/>
    <property type="project" value="RGD"/>
</dbReference>
<dbReference type="GO" id="GO:0005856">
    <property type="term" value="C:cytoskeleton"/>
    <property type="evidence" value="ECO:0000318"/>
    <property type="project" value="GO_Central"/>
</dbReference>
<dbReference type="GO" id="GO:0005882">
    <property type="term" value="C:intermediate filament"/>
    <property type="evidence" value="ECO:0007669"/>
    <property type="project" value="UniProtKB-KW"/>
</dbReference>
<dbReference type="GO" id="GO:0005198">
    <property type="term" value="F:structural molecule activity"/>
    <property type="evidence" value="ECO:0007669"/>
    <property type="project" value="InterPro"/>
</dbReference>
<dbReference type="GO" id="GO:0006915">
    <property type="term" value="P:apoptotic process"/>
    <property type="evidence" value="ECO:0007669"/>
    <property type="project" value="UniProtKB-KW"/>
</dbReference>
<dbReference type="GO" id="GO:0009267">
    <property type="term" value="P:cellular response to starvation"/>
    <property type="evidence" value="ECO:0000250"/>
    <property type="project" value="UniProtKB"/>
</dbReference>
<dbReference type="GO" id="GO:0030855">
    <property type="term" value="P:epithelial cell differentiation"/>
    <property type="evidence" value="ECO:0000318"/>
    <property type="project" value="GO_Central"/>
</dbReference>
<dbReference type="GO" id="GO:0045109">
    <property type="term" value="P:intermediate filament organization"/>
    <property type="evidence" value="ECO:0000250"/>
    <property type="project" value="UniProtKB"/>
</dbReference>
<dbReference type="GO" id="GO:0050708">
    <property type="term" value="P:regulation of protein secretion"/>
    <property type="evidence" value="ECO:0000250"/>
    <property type="project" value="UniProtKB"/>
</dbReference>
<dbReference type="FunFam" id="1.20.5.1160:FF:000002">
    <property type="entry name" value="Type I keratin 10"/>
    <property type="match status" value="1"/>
</dbReference>
<dbReference type="FunFam" id="1.20.5.170:FF:000002">
    <property type="entry name" value="Type I keratin KA11"/>
    <property type="match status" value="1"/>
</dbReference>
<dbReference type="Gene3D" id="1.20.5.170">
    <property type="match status" value="1"/>
</dbReference>
<dbReference type="Gene3D" id="1.20.5.500">
    <property type="entry name" value="Single helix bin"/>
    <property type="match status" value="1"/>
</dbReference>
<dbReference type="Gene3D" id="1.20.5.1160">
    <property type="entry name" value="Vasodilator-stimulated phosphoprotein"/>
    <property type="match status" value="1"/>
</dbReference>
<dbReference type="InterPro" id="IPR018039">
    <property type="entry name" value="IF_conserved"/>
</dbReference>
<dbReference type="InterPro" id="IPR039008">
    <property type="entry name" value="IF_rod_dom"/>
</dbReference>
<dbReference type="InterPro" id="IPR002957">
    <property type="entry name" value="Keratin_I"/>
</dbReference>
<dbReference type="PANTHER" id="PTHR23239">
    <property type="entry name" value="INTERMEDIATE FILAMENT"/>
    <property type="match status" value="1"/>
</dbReference>
<dbReference type="PANTHER" id="PTHR23239:SF167">
    <property type="entry name" value="KERATIN, TYPE I CYTOSKELETAL 20"/>
    <property type="match status" value="1"/>
</dbReference>
<dbReference type="Pfam" id="PF00038">
    <property type="entry name" value="Filament"/>
    <property type="match status" value="1"/>
</dbReference>
<dbReference type="PRINTS" id="PR01248">
    <property type="entry name" value="TYPE1KERATIN"/>
</dbReference>
<dbReference type="SMART" id="SM01391">
    <property type="entry name" value="Filament"/>
    <property type="match status" value="1"/>
</dbReference>
<dbReference type="SUPFAM" id="SSF64593">
    <property type="entry name" value="Intermediate filament protein, coiled coil region"/>
    <property type="match status" value="2"/>
</dbReference>
<dbReference type="PROSITE" id="PS00226">
    <property type="entry name" value="IF_ROD_1"/>
    <property type="match status" value="1"/>
</dbReference>
<dbReference type="PROSITE" id="PS51842">
    <property type="entry name" value="IF_ROD_2"/>
    <property type="match status" value="1"/>
</dbReference>
<name>K1C20_RAT</name>
<evidence type="ECO:0000250" key="1"/>
<evidence type="ECO:0000255" key="2">
    <source>
        <dbReference type="PROSITE-ProRule" id="PRU01188"/>
    </source>
</evidence>
<evidence type="ECO:0000256" key="3">
    <source>
        <dbReference type="SAM" id="MobiDB-lite"/>
    </source>
</evidence>
<evidence type="ECO:0000269" key="4">
    <source>
    </source>
</evidence>
<evidence type="ECO:0000269" key="5">
    <source>
    </source>
</evidence>
<evidence type="ECO:0007744" key="6">
    <source>
    </source>
</evidence>
<protein>
    <recommendedName>
        <fullName>Keratin, type I cytoskeletal 20</fullName>
    </recommendedName>
    <alternativeName>
        <fullName>Cytokeratin-20</fullName>
        <shortName>CK-20</shortName>
    </alternativeName>
    <alternativeName>
        <fullName>Cytokeratin-21</fullName>
        <shortName>CK-21</shortName>
    </alternativeName>
    <alternativeName>
        <fullName>Keratin-20</fullName>
        <shortName>K20</shortName>
    </alternativeName>
</protein>
<organism>
    <name type="scientific">Rattus norvegicus</name>
    <name type="common">Rat</name>
    <dbReference type="NCBI Taxonomy" id="10116"/>
    <lineage>
        <taxon>Eukaryota</taxon>
        <taxon>Metazoa</taxon>
        <taxon>Chordata</taxon>
        <taxon>Craniata</taxon>
        <taxon>Vertebrata</taxon>
        <taxon>Euteleostomi</taxon>
        <taxon>Mammalia</taxon>
        <taxon>Eutheria</taxon>
        <taxon>Euarchontoglires</taxon>
        <taxon>Glires</taxon>
        <taxon>Rodentia</taxon>
        <taxon>Myomorpha</taxon>
        <taxon>Muroidea</taxon>
        <taxon>Muridae</taxon>
        <taxon>Murinae</taxon>
        <taxon>Rattus</taxon>
    </lineage>
</organism>
<reference key="1">
    <citation type="journal article" date="1991" name="J. Biol. Chem.">
        <title>Identification and characterization of rat intestinal keratins. Molecular cloning of cDNAs encoding cytokeratins 8, 19, and a new 49-kDa type I cytokeratin (cytokeratin 21) expressed by differentiated intestinal epithelial cells.</title>
        <authorList>
            <person name="Chandler J.S."/>
            <person name="Calnek D."/>
            <person name="Quaroni A."/>
        </authorList>
    </citation>
    <scope>NUCLEOTIDE SEQUENCE [MRNA]</scope>
    <scope>TISSUE SPECIFICITY</scope>
    <source>
        <strain>Sprague-Dawley</strain>
        <tissue>Intestinal epithelium</tissue>
    </source>
</reference>
<reference key="2">
    <citation type="journal article" date="1993" name="Differentiation">
        <title>Differential localization by in situ hybridization of distinct keratin mRNA species during intestinal epithelial cell development and differentiation.</title>
        <authorList>
            <person name="Calnek D."/>
            <person name="Quaroni A."/>
        </authorList>
    </citation>
    <scope>TISSUE SPECIFICITY</scope>
    <scope>DEVELOPMENTAL STAGE</scope>
</reference>
<reference key="3">
    <citation type="journal article" date="2012" name="Nat. Commun.">
        <title>Quantitative maps of protein phosphorylation sites across 14 different rat organs and tissues.</title>
        <authorList>
            <person name="Lundby A."/>
            <person name="Secher A."/>
            <person name="Lage K."/>
            <person name="Nordsborg N.B."/>
            <person name="Dmytriyev A."/>
            <person name="Lundby C."/>
            <person name="Olsen J.V."/>
        </authorList>
    </citation>
    <scope>PHOSPHORYLATION [LARGE SCALE ANALYSIS] AT SER-13; SER-16 AND SER-26</scope>
    <scope>IDENTIFICATION BY MASS SPECTROMETRY [LARGE SCALE ANALYSIS]</scope>
</reference>
<keyword id="KW-0053">Apoptosis</keyword>
<keyword id="KW-0175">Coiled coil</keyword>
<keyword id="KW-0403">Intermediate filament</keyword>
<keyword id="KW-0416">Keratin</keyword>
<keyword id="KW-0597">Phosphoprotein</keyword>
<keyword id="KW-1185">Reference proteome</keyword>
<sequence length="429" mass="49388">MDFSRRSFHRSLSSSSQGPALSTSGSLYRKGTMQRLGLHSVYGGWRHGTRISVSKTTMSYGNHLSNGGDLFGGNEKLAMQNLNDRLASYLEKVRSLEQSNSKLEAQIKQWYETNAPSTIRDYSSYYAQIKELQDQIKDAQIENARCVLQIDNAKLAAEDFRLKFETERGMRITVEADLQGLSKVYDDLTLQKTDLEIQIEELNKDLALLKKEHQEEVEVLRRQLGNNVNVEVDAAPGLNLGEIMNEMRQKYEILAQKNLQEAKEQFERQTQTLEKQVTVNIEELRGTEVQVTELRRSYQTLEIELQSQLSMKESLERTLEETKARYASQLAAIQEMLSSLEAQLMQIRSDTERQNQEYNILLDIKTRLEQEIATYRRLLEGEDIKTTEYQLNTLEAKDIKKTRKIKTVVEEVVDGKVVSSEVKEIEENI</sequence>
<proteinExistence type="evidence at protein level"/>